<name>BOPA_BURP6</name>
<reference key="1">
    <citation type="journal article" date="2010" name="Genome Biol. Evol.">
        <title>Continuing evolution of Burkholderia mallei through genome reduction and large-scale rearrangements.</title>
        <authorList>
            <person name="Losada L."/>
            <person name="Ronning C.M."/>
            <person name="DeShazer D."/>
            <person name="Woods D."/>
            <person name="Fedorova N."/>
            <person name="Kim H.S."/>
            <person name="Shabalina S.A."/>
            <person name="Pearson T.R."/>
            <person name="Brinkac L."/>
            <person name="Tan P."/>
            <person name="Nandi T."/>
            <person name="Crabtree J."/>
            <person name="Badger J."/>
            <person name="Beckstrom-Sternberg S."/>
            <person name="Saqib M."/>
            <person name="Schutzer S.E."/>
            <person name="Keim P."/>
            <person name="Nierman W.C."/>
        </authorList>
    </citation>
    <scope>NUCLEOTIDE SEQUENCE [LARGE SCALE GENOMIC DNA]</scope>
    <source>
        <strain>668</strain>
    </source>
</reference>
<proteinExistence type="inferred from homology"/>
<organism>
    <name type="scientific">Burkholderia pseudomallei (strain 668)</name>
    <dbReference type="NCBI Taxonomy" id="320373"/>
    <lineage>
        <taxon>Bacteria</taxon>
        <taxon>Pseudomonadati</taxon>
        <taxon>Pseudomonadota</taxon>
        <taxon>Betaproteobacteria</taxon>
        <taxon>Burkholderiales</taxon>
        <taxon>Burkholderiaceae</taxon>
        <taxon>Burkholderia</taxon>
        <taxon>pseudomallei group</taxon>
    </lineage>
</organism>
<keyword id="KW-0175">Coiled coil</keyword>
<keyword id="KW-0964">Secreted</keyword>
<keyword id="KW-0843">Virulence</keyword>
<accession>A3NLC6</accession>
<dbReference type="EMBL" id="CP000571">
    <property type="protein sequence ID" value="ABN88245.1"/>
    <property type="molecule type" value="Genomic_DNA"/>
</dbReference>
<dbReference type="RefSeq" id="WP_011853452.1">
    <property type="nucleotide sequence ID" value="NC_009075.1"/>
</dbReference>
<dbReference type="KEGG" id="bpd:BURPS668_A2153"/>
<dbReference type="HOGENOM" id="CLU_531773_0_0_4"/>
<dbReference type="GO" id="GO:0005615">
    <property type="term" value="C:extracellular space"/>
    <property type="evidence" value="ECO:0007669"/>
    <property type="project" value="InterPro"/>
</dbReference>
<dbReference type="Gene3D" id="4.10.1330.10">
    <property type="entry name" value="non globular Virulence effector SptP domain"/>
    <property type="match status" value="1"/>
</dbReference>
<dbReference type="InterPro" id="IPR011070">
    <property type="entry name" value="Globular_prot_asu/bsu"/>
</dbReference>
<dbReference type="InterPro" id="IPR015203">
    <property type="entry name" value="SptP_N"/>
</dbReference>
<dbReference type="InterPro" id="IPR044899">
    <property type="entry name" value="SptP_N_sf"/>
</dbReference>
<dbReference type="Pfam" id="PF09119">
    <property type="entry name" value="SicP-binding"/>
    <property type="match status" value="1"/>
</dbReference>
<dbReference type="SUPFAM" id="SSF56568">
    <property type="entry name" value="Non-globular alpha+beta subunits of globular proteins"/>
    <property type="match status" value="1"/>
</dbReference>
<protein>
    <recommendedName>
        <fullName>Effector protein BopA</fullName>
    </recommendedName>
</protein>
<sequence length="512" mass="56781">MINVGAFVASARSGARVVVGGDARGPVVSAARLGMKERLFAFLAHVPLLKHCDAVRRYAEQVRMENRRSLEVFVLALSKRYGPEGAKAAFDYGARRDGAPLDQRRVRNMVSIAEHFHGTGDAKPLARQMVFRSWECRGLDHPGHASLTIKNQADADAGRHVYEHVSWWPNQRLGSKEHFDRIEPKTLDGYRIDKRSEISSATEQRLREGDAARRKILADGFKYANQDERHDALFFPRAGQKLDKDAEWGLSARKVYFPAIGFNHDRRDTDRPRAFVLFGLNEAAMLRDARTVKEGAKSGELKYRMISKKENCASMALRVLRAGGAEHFVPYTAAWISEDPNHAHAYALAVQARIDALNQRRADVERRCERLHDSASVRQAWRAFSEAGGASASPLAEDAGRGRASAHMRQARLDEHAREVERIGAYFAELSAGRSGKHRDRADADLADAMKRCAPSARDDVAALTRKASVLVETLGRHLDAPPPSDSSALRRLAAHAMIGRIEAFMAAAIAA</sequence>
<evidence type="ECO:0000250" key="1"/>
<evidence type="ECO:0000255" key="2"/>
<evidence type="ECO:0000305" key="3"/>
<gene>
    <name type="primary">bopA</name>
    <name type="ordered locus">BURPS668_A2153</name>
</gene>
<comment type="function">
    <text evidence="1">Plays a role in mediating bacterial evasion from the host autophagic pathway.</text>
</comment>
<comment type="subcellular location">
    <subcellularLocation>
        <location evidence="1">Secreted</location>
    </subcellularLocation>
    <text evidence="1">Secreted via the bsa type III secretion system.</text>
</comment>
<comment type="similarity">
    <text evidence="3">Belongs to the BopA/IcsB family.</text>
</comment>
<feature type="chain" id="PRO_0000344025" description="Effector protein BopA">
    <location>
        <begin position="1"/>
        <end position="512"/>
    </location>
</feature>
<feature type="coiled-coil region" evidence="2">
    <location>
        <begin position="347"/>
        <end position="376"/>
    </location>
</feature>